<accession>Q9EZQ7</accession>
<sequence length="310" mass="32476">MTFSALPFRRADRRRLLAAALAACALTLTAACDSGTVTVPVTDSVTTSAVADPRFAELETTSGARLGVFAVDTGSGRTVAHRADERFPMASTFKGLACGALLREHPLSTGYFDQVIHYSAAELVEYSPVTETRVETGMTVRELCDAAITVSDNTAGNQLLKLLGGPEGFTASLRSLGDATSRLDRWETDLNTAIPGDERDTTTPAALAADYRALVVGDVLGAPERDQLKAWLVANTTGATRIRAGLPADWTVGDKTGSPAYGSALDVAVAWPPGRAPIVIAVLSTKSEQDAEPDNALLAEATRVVVDALG</sequence>
<comment type="function">
    <text>Confers high levels of resistance to amoxicillin, benzylpenicillin, piperacillin, ticarcillin and cephalothin. Not active against ceftazidime, cefotaxime and aztreonam.</text>
</comment>
<comment type="catalytic activity">
    <reaction evidence="4">
        <text>a beta-lactam + H2O = a substituted beta-amino acid</text>
        <dbReference type="Rhea" id="RHEA:20401"/>
        <dbReference type="ChEBI" id="CHEBI:15377"/>
        <dbReference type="ChEBI" id="CHEBI:35627"/>
        <dbReference type="ChEBI" id="CHEBI:140347"/>
        <dbReference type="EC" id="3.5.2.6"/>
    </reaction>
</comment>
<comment type="activity regulation">
    <text evidence="5">Inhibited by clavulanic acid.</text>
</comment>
<comment type="biophysicochemical properties">
    <kinetics>
        <KM evidence="5">30 uM for benzylpenicillin</KM>
        <KM evidence="5">50 uM for amoxicillin</KM>
        <KM evidence="5">7 uM for ticarcillin</KM>
        <KM evidence="5">330 uM for piperacillin</KM>
        <KM evidence="5">20 uM for cephalothin</KM>
    </kinetics>
</comment>
<comment type="subcellular location">
    <subcellularLocation>
        <location evidence="1">Cell membrane</location>
        <topology evidence="1">Lipid-anchor</topology>
    </subcellularLocation>
</comment>
<comment type="miscellaneous">
    <text evidence="7">The class A beta-lactamase family has a specific amino-acid numbering system, sometimes called Ambler or ABL numbering and often misspelt as Amber. A multiple sequence alignment was used to derive a consensus sequence and then the consensus was numbered taking into account insertions and deletions. This allows use of identical numbers, e.g. for active site residues, despite differences in protein length. UniProt always uses natural numbering of residues, hence there appear to be differences in numbering between this entry and some papers.</text>
</comment>
<comment type="similarity">
    <text evidence="6">Belongs to the class-A beta-lactamase family.</text>
</comment>
<name>BLAC_NOCAS</name>
<organism>
    <name type="scientific">Nocardia asteroides</name>
    <dbReference type="NCBI Taxonomy" id="1824"/>
    <lineage>
        <taxon>Bacteria</taxon>
        <taxon>Bacillati</taxon>
        <taxon>Actinomycetota</taxon>
        <taxon>Actinomycetes</taxon>
        <taxon>Mycobacteriales</taxon>
        <taxon>Nocardiaceae</taxon>
        <taxon>Nocardia</taxon>
    </lineage>
</organism>
<reference key="1">
    <citation type="journal article" date="2001" name="Antimicrob. Agents Chemother.">
        <title>Molecular and biochemical analysis of AST-1, a class A beta-lactamase from Nocardia asteroides sensu stricto.</title>
        <authorList>
            <person name="Poirel L."/>
            <person name="Laurent F."/>
            <person name="Naas T."/>
            <person name="Labia R."/>
            <person name="Boiron P."/>
            <person name="Nordmann P."/>
        </authorList>
    </citation>
    <scope>NUCLEOTIDE SEQUENCE [GENOMIC DNA]</scope>
    <scope>ACTIVITY REGULATION</scope>
    <scope>BIOPHYSICOCHEMICAL PROPERTIES</scope>
</reference>
<reference key="2">
    <citation type="journal article" date="1991" name="Biochem. J.">
        <title>A standard numbering scheme for the class A beta-lactamases.</title>
        <authorList>
            <person name="Ambler R.P."/>
            <person name="Coulson A.F."/>
            <person name="Frere J.M."/>
            <person name="Ghuysen J.M."/>
            <person name="Joris B."/>
            <person name="Forsman M."/>
            <person name="Levesque R.C."/>
            <person name="Tiraby G."/>
            <person name="Waley S.G."/>
        </authorList>
    </citation>
    <scope>AMINO ACID NUMBERING SCHEME</scope>
</reference>
<feature type="signal peptide" evidence="3">
    <location>
        <begin position="1"/>
        <end position="31"/>
    </location>
</feature>
<feature type="chain" id="PRO_0000313797" description="Beta-lactamase AST-1">
    <location>
        <begin position="32"/>
        <end position="310"/>
    </location>
</feature>
<feature type="active site" description="Acyl-ester intermediate" evidence="2">
    <location>
        <position position="91"/>
    </location>
</feature>
<feature type="active site" description="Proton acceptor" evidence="2">
    <location>
        <position position="187"/>
    </location>
</feature>
<feature type="binding site" evidence="2">
    <location>
        <position position="151"/>
    </location>
    <ligand>
        <name>substrate</name>
    </ligand>
</feature>
<feature type="binding site" evidence="1">
    <location>
        <begin position="255"/>
        <end position="257"/>
    </location>
    <ligand>
        <name>substrate</name>
    </ligand>
</feature>
<feature type="site" description="Increases nucleophilicity of active site Ser" evidence="2">
    <location>
        <position position="94"/>
    </location>
</feature>
<feature type="lipid moiety-binding region" description="N-palmitoyl cysteine" evidence="3">
    <location>
        <position position="32"/>
    </location>
</feature>
<feature type="lipid moiety-binding region" description="S-diacylglycerol cysteine" evidence="3">
    <location>
        <position position="32"/>
    </location>
</feature>
<proteinExistence type="evidence at protein level"/>
<evidence type="ECO:0000250" key="1"/>
<evidence type="ECO:0000250" key="2">
    <source>
        <dbReference type="UniProtKB" id="P9WKD3"/>
    </source>
</evidence>
<evidence type="ECO:0000255" key="3"/>
<evidence type="ECO:0000255" key="4">
    <source>
        <dbReference type="PROSITE-ProRule" id="PRU10101"/>
    </source>
</evidence>
<evidence type="ECO:0000269" key="5">
    <source>
    </source>
</evidence>
<evidence type="ECO:0000305" key="6"/>
<evidence type="ECO:0000305" key="7">
    <source>
    </source>
</evidence>
<dbReference type="EC" id="3.5.2.6"/>
<dbReference type="EMBL" id="AF279904">
    <property type="protein sequence ID" value="AAG44836.1"/>
    <property type="molecule type" value="Genomic_DNA"/>
</dbReference>
<dbReference type="RefSeq" id="WP_063857821.1">
    <property type="nucleotide sequence ID" value="NG_048690.1"/>
</dbReference>
<dbReference type="SMR" id="Q9EZQ7"/>
<dbReference type="CARD" id="ARO:3004740">
    <property type="molecule name" value="AST-1"/>
    <property type="mechanism identifier" value="ARO:0001004"/>
    <property type="mechanism name" value="antibiotic inactivation"/>
</dbReference>
<dbReference type="SABIO-RK" id="Q9EZQ7"/>
<dbReference type="GO" id="GO:0005886">
    <property type="term" value="C:plasma membrane"/>
    <property type="evidence" value="ECO:0007669"/>
    <property type="project" value="UniProtKB-SubCell"/>
</dbReference>
<dbReference type="GO" id="GO:0008800">
    <property type="term" value="F:beta-lactamase activity"/>
    <property type="evidence" value="ECO:0007669"/>
    <property type="project" value="UniProtKB-EC"/>
</dbReference>
<dbReference type="GO" id="GO:0030655">
    <property type="term" value="P:beta-lactam antibiotic catabolic process"/>
    <property type="evidence" value="ECO:0007669"/>
    <property type="project" value="InterPro"/>
</dbReference>
<dbReference type="GO" id="GO:0046677">
    <property type="term" value="P:response to antibiotic"/>
    <property type="evidence" value="ECO:0007669"/>
    <property type="project" value="UniProtKB-KW"/>
</dbReference>
<dbReference type="Gene3D" id="3.40.710.10">
    <property type="entry name" value="DD-peptidase/beta-lactamase superfamily"/>
    <property type="match status" value="1"/>
</dbReference>
<dbReference type="InterPro" id="IPR012338">
    <property type="entry name" value="Beta-lactam/transpept-like"/>
</dbReference>
<dbReference type="InterPro" id="IPR045155">
    <property type="entry name" value="Beta-lactam_cat"/>
</dbReference>
<dbReference type="InterPro" id="IPR000871">
    <property type="entry name" value="Beta-lactam_class-A"/>
</dbReference>
<dbReference type="InterPro" id="IPR023650">
    <property type="entry name" value="Beta-lactam_class-A_AS"/>
</dbReference>
<dbReference type="NCBIfam" id="NF033103">
    <property type="entry name" value="bla_class_A"/>
    <property type="match status" value="1"/>
</dbReference>
<dbReference type="PANTHER" id="PTHR35333">
    <property type="entry name" value="BETA-LACTAMASE"/>
    <property type="match status" value="1"/>
</dbReference>
<dbReference type="PANTHER" id="PTHR35333:SF3">
    <property type="entry name" value="BETA-LACTAMASE-TYPE TRANSPEPTIDASE FOLD CONTAINING PROTEIN"/>
    <property type="match status" value="1"/>
</dbReference>
<dbReference type="Pfam" id="PF13354">
    <property type="entry name" value="Beta-lactamase2"/>
    <property type="match status" value="1"/>
</dbReference>
<dbReference type="PRINTS" id="PR00118">
    <property type="entry name" value="BLACTAMASEA"/>
</dbReference>
<dbReference type="SUPFAM" id="SSF56601">
    <property type="entry name" value="beta-lactamase/transpeptidase-like"/>
    <property type="match status" value="1"/>
</dbReference>
<dbReference type="PROSITE" id="PS00146">
    <property type="entry name" value="BETA_LACTAMASE_A"/>
    <property type="match status" value="1"/>
</dbReference>
<gene>
    <name type="primary">bla</name>
    <name type="synonym">ast1</name>
</gene>
<keyword id="KW-0046">Antibiotic resistance</keyword>
<keyword id="KW-1003">Cell membrane</keyword>
<keyword id="KW-0378">Hydrolase</keyword>
<keyword id="KW-0449">Lipoprotein</keyword>
<keyword id="KW-0472">Membrane</keyword>
<keyword id="KW-0564">Palmitate</keyword>
<keyword id="KW-0732">Signal</keyword>
<protein>
    <recommendedName>
        <fullName>Beta-lactamase AST-1</fullName>
        <ecNumber>3.5.2.6</ecNumber>
    </recommendedName>
</protein>